<accession>A4XP32</accession>
<sequence>MSTSSSPYAAFAALLSSAGHSVSPAELHGLLLGRSCAGAGFDADAWLLDAADLLGGEPQDSVRQALIGLQEMVKGELCSEDMAVVLLLPDDETPLAQRAVALGQWCQGFLGGFGLTARDGALSAEAMEVLQDLSAIAQVQSALEESEDGENDYMEVMEYLRVAPLLLFTECAKPAAPAAKPSLH</sequence>
<name>Y324_ECTM1</name>
<reference key="1">
    <citation type="submission" date="2007-04" db="EMBL/GenBank/DDBJ databases">
        <title>Complete sequence of Pseudomonas mendocina ymp.</title>
        <authorList>
            <consortium name="US DOE Joint Genome Institute"/>
            <person name="Copeland A."/>
            <person name="Lucas S."/>
            <person name="Lapidus A."/>
            <person name="Barry K."/>
            <person name="Glavina del Rio T."/>
            <person name="Dalin E."/>
            <person name="Tice H."/>
            <person name="Pitluck S."/>
            <person name="Kiss H."/>
            <person name="Brettin T."/>
            <person name="Detter J.C."/>
            <person name="Bruce D."/>
            <person name="Han C."/>
            <person name="Schmutz J."/>
            <person name="Larimer F."/>
            <person name="Land M."/>
            <person name="Hauser L."/>
            <person name="Kyrpides N."/>
            <person name="Mikhailova N."/>
            <person name="Hersman L."/>
            <person name="Dubois J."/>
            <person name="Maurice P."/>
            <person name="Richardson P."/>
        </authorList>
    </citation>
    <scope>NUCLEOTIDE SEQUENCE [LARGE SCALE GENOMIC DNA]</scope>
    <source>
        <strain>ymp</strain>
    </source>
</reference>
<organism>
    <name type="scientific">Ectopseudomonas mendocina (strain ymp)</name>
    <name type="common">Pseudomonas mendocina</name>
    <dbReference type="NCBI Taxonomy" id="399739"/>
    <lineage>
        <taxon>Bacteria</taxon>
        <taxon>Pseudomonadati</taxon>
        <taxon>Pseudomonadota</taxon>
        <taxon>Gammaproteobacteria</taxon>
        <taxon>Pseudomonadales</taxon>
        <taxon>Pseudomonadaceae</taxon>
        <taxon>Ectopseudomonas</taxon>
    </lineage>
</organism>
<gene>
    <name type="ordered locus">Pmen_0324</name>
</gene>
<evidence type="ECO:0000255" key="1">
    <source>
        <dbReference type="HAMAP-Rule" id="MF_00346"/>
    </source>
</evidence>
<comment type="similarity">
    <text evidence="1">Belongs to the UPF0149 family.</text>
</comment>
<protein>
    <recommendedName>
        <fullName evidence="1">UPF0149 protein Pmen_0324</fullName>
    </recommendedName>
</protein>
<proteinExistence type="inferred from homology"/>
<feature type="chain" id="PRO_1000059830" description="UPF0149 protein Pmen_0324">
    <location>
        <begin position="1"/>
        <end position="184"/>
    </location>
</feature>
<dbReference type="EMBL" id="CP000680">
    <property type="protein sequence ID" value="ABP83098.1"/>
    <property type="molecule type" value="Genomic_DNA"/>
</dbReference>
<dbReference type="SMR" id="A4XP32"/>
<dbReference type="STRING" id="399739.Pmen_0324"/>
<dbReference type="KEGG" id="pmy:Pmen_0324"/>
<dbReference type="PATRIC" id="fig|399739.8.peg.331"/>
<dbReference type="eggNOG" id="COG3079">
    <property type="taxonomic scope" value="Bacteria"/>
</dbReference>
<dbReference type="HOGENOM" id="CLU_085336_0_0_6"/>
<dbReference type="OrthoDB" id="9783391at2"/>
<dbReference type="GO" id="GO:0005829">
    <property type="term" value="C:cytosol"/>
    <property type="evidence" value="ECO:0007669"/>
    <property type="project" value="TreeGrafter"/>
</dbReference>
<dbReference type="Gene3D" id="1.20.120.740">
    <property type="entry name" value="YgfB uncharacterised protein family UPF0149, PF03695"/>
    <property type="match status" value="1"/>
</dbReference>
<dbReference type="HAMAP" id="MF_00346">
    <property type="entry name" value="UPF0149"/>
    <property type="match status" value="1"/>
</dbReference>
<dbReference type="InterPro" id="IPR011978">
    <property type="entry name" value="YgfB-like"/>
</dbReference>
<dbReference type="InterPro" id="IPR036255">
    <property type="entry name" value="YgfB-like_sf"/>
</dbReference>
<dbReference type="NCBIfam" id="NF002562">
    <property type="entry name" value="PRK02166.1"/>
    <property type="match status" value="1"/>
</dbReference>
<dbReference type="PANTHER" id="PTHR37528">
    <property type="entry name" value="UPF0149 PROTEIN YGFB"/>
    <property type="match status" value="1"/>
</dbReference>
<dbReference type="PANTHER" id="PTHR37528:SF1">
    <property type="entry name" value="UPF0149 PROTEIN YGFB"/>
    <property type="match status" value="1"/>
</dbReference>
<dbReference type="Pfam" id="PF03695">
    <property type="entry name" value="UPF0149"/>
    <property type="match status" value="1"/>
</dbReference>
<dbReference type="SUPFAM" id="SSF101327">
    <property type="entry name" value="YgfB-like"/>
    <property type="match status" value="1"/>
</dbReference>